<dbReference type="EC" id="2.3.1.35" evidence="1"/>
<dbReference type="EC" id="2.3.1.1" evidence="1"/>
<dbReference type="EMBL" id="BA000053">
    <property type="protein sequence ID" value="BAE62397.1"/>
    <property type="molecule type" value="Genomic_DNA"/>
</dbReference>
<dbReference type="RefSeq" id="XP_001823530.3">
    <property type="nucleotide sequence ID" value="XM_001823478.3"/>
</dbReference>
<dbReference type="SMR" id="Q2U7R8"/>
<dbReference type="STRING" id="510516.Q2U7R8"/>
<dbReference type="MEROPS" id="T05.001"/>
<dbReference type="EnsemblFungi" id="BAE62397">
    <property type="protein sequence ID" value="BAE62397"/>
    <property type="gene ID" value="AO090701000729"/>
</dbReference>
<dbReference type="GeneID" id="5995587"/>
<dbReference type="HOGENOM" id="CLU_027172_1_0_1"/>
<dbReference type="OMA" id="WGRIVMA"/>
<dbReference type="UniPathway" id="UPA00068">
    <property type="reaction ID" value="UER00106"/>
</dbReference>
<dbReference type="UniPathway" id="UPA00068">
    <property type="reaction ID" value="UER00111"/>
</dbReference>
<dbReference type="Proteomes" id="UP000006564">
    <property type="component" value="Chromosome 5"/>
</dbReference>
<dbReference type="GO" id="GO:0005759">
    <property type="term" value="C:mitochondrial matrix"/>
    <property type="evidence" value="ECO:0007669"/>
    <property type="project" value="UniProtKB-SubCell"/>
</dbReference>
<dbReference type="GO" id="GO:0004358">
    <property type="term" value="F:glutamate N-acetyltransferase activity"/>
    <property type="evidence" value="ECO:0007669"/>
    <property type="project" value="UniProtKB-UniRule"/>
</dbReference>
<dbReference type="GO" id="GO:0004042">
    <property type="term" value="F:L-glutamate N-acetyltransferase activity"/>
    <property type="evidence" value="ECO:0007669"/>
    <property type="project" value="UniProtKB-UniRule"/>
</dbReference>
<dbReference type="GO" id="GO:0006526">
    <property type="term" value="P:L-arginine biosynthetic process"/>
    <property type="evidence" value="ECO:0007669"/>
    <property type="project" value="UniProtKB-UniRule"/>
</dbReference>
<dbReference type="GO" id="GO:0006592">
    <property type="term" value="P:ornithine biosynthetic process"/>
    <property type="evidence" value="ECO:0007669"/>
    <property type="project" value="EnsemblFungi"/>
</dbReference>
<dbReference type="CDD" id="cd02152">
    <property type="entry name" value="OAT"/>
    <property type="match status" value="1"/>
</dbReference>
<dbReference type="FunFam" id="3.60.70.12:FF:000001">
    <property type="entry name" value="Arginine biosynthesis bifunctional protein ArgJ, chloroplastic"/>
    <property type="match status" value="1"/>
</dbReference>
<dbReference type="FunFam" id="3.10.20.340:FF:000002">
    <property type="entry name" value="Arginine biosynthesis bifunctional protein ArgJ, mitochondrial"/>
    <property type="match status" value="1"/>
</dbReference>
<dbReference type="FunFam" id="3.30.2330.10:FF:000001">
    <property type="entry name" value="Arginine biosynthesis bifunctional protein ArgJ, mitochondrial"/>
    <property type="match status" value="1"/>
</dbReference>
<dbReference type="Gene3D" id="3.30.2330.10">
    <property type="entry name" value="arginine biosynthesis bifunctional protein suprefamily"/>
    <property type="match status" value="1"/>
</dbReference>
<dbReference type="Gene3D" id="3.10.20.340">
    <property type="entry name" value="ArgJ beta chain, C-terminal domain"/>
    <property type="match status" value="1"/>
</dbReference>
<dbReference type="Gene3D" id="3.60.70.12">
    <property type="entry name" value="L-amino peptidase D-ALA esterase/amidase"/>
    <property type="match status" value="1"/>
</dbReference>
<dbReference type="HAMAP" id="MF_01106">
    <property type="entry name" value="ArgJ"/>
    <property type="match status" value="1"/>
</dbReference>
<dbReference type="InterPro" id="IPR002813">
    <property type="entry name" value="Arg_biosynth_ArgJ"/>
</dbReference>
<dbReference type="InterPro" id="IPR016117">
    <property type="entry name" value="ArgJ-like_dom_sf"/>
</dbReference>
<dbReference type="InterPro" id="IPR042195">
    <property type="entry name" value="ArgJ_beta_C"/>
</dbReference>
<dbReference type="NCBIfam" id="TIGR00120">
    <property type="entry name" value="ArgJ"/>
    <property type="match status" value="1"/>
</dbReference>
<dbReference type="NCBIfam" id="NF003802">
    <property type="entry name" value="PRK05388.1"/>
    <property type="match status" value="1"/>
</dbReference>
<dbReference type="PANTHER" id="PTHR23100">
    <property type="entry name" value="ARGININE BIOSYNTHESIS BIFUNCTIONAL PROTEIN ARGJ"/>
    <property type="match status" value="1"/>
</dbReference>
<dbReference type="PANTHER" id="PTHR23100:SF0">
    <property type="entry name" value="ARGININE BIOSYNTHESIS BIFUNCTIONAL PROTEIN ARGJ, MITOCHONDRIAL"/>
    <property type="match status" value="1"/>
</dbReference>
<dbReference type="Pfam" id="PF01960">
    <property type="entry name" value="ArgJ"/>
    <property type="match status" value="1"/>
</dbReference>
<dbReference type="SUPFAM" id="SSF56266">
    <property type="entry name" value="DmpA/ArgJ-like"/>
    <property type="match status" value="1"/>
</dbReference>
<sequence length="456" mass="47996">MAAFARMVKGQVRSYSAPVDMAIPASKRKFIPSSGSYPKGFVVSGTHVGVKASNTKFPDLALISSETPCSAAAVFTTNKFQAAPVQVSRDIIKTRQGQGIRSVVINSGCANAVTGKGGLEDAVSMGKKVDECDGLNEPSTLVMSTGVIGQRLPISKILKKVPVAHANLSSTHDAWLTTARAICTTDTFPKLLSRTFTLPSSPGRTYSLAGMTKGAGMIHPNMATLLGVLCTDAPIEPSALQSLLKHSVNRSFNSISVDGDTSTNDTIAILANGAAGGAPISSSSSDDYAAMQDILTSFAQSLSQLVVRDGEGATKFVTVRVQNSPDYESGRLIASTIARSPLVKTALYGKDANWGRILCAIGYTQGVAPGTVVPEHTSVSFKPVDGSPVLNLLVNGEPEQVDEERASVILQEEDLEIVVDLGGGEKGEQGLGGEEAVYWFCDFSHEYVTINGDYRT</sequence>
<proteinExistence type="inferred from homology"/>
<keyword id="KW-0012">Acyltransferase</keyword>
<keyword id="KW-0028">Amino-acid biosynthesis</keyword>
<keyword id="KW-0055">Arginine biosynthesis</keyword>
<keyword id="KW-0068">Autocatalytic cleavage</keyword>
<keyword id="KW-0496">Mitochondrion</keyword>
<keyword id="KW-0511">Multifunctional enzyme</keyword>
<keyword id="KW-1185">Reference proteome</keyword>
<keyword id="KW-0808">Transferase</keyword>
<reference key="1">
    <citation type="journal article" date="2005" name="Nature">
        <title>Genome sequencing and analysis of Aspergillus oryzae.</title>
        <authorList>
            <person name="Machida M."/>
            <person name="Asai K."/>
            <person name="Sano M."/>
            <person name="Tanaka T."/>
            <person name="Kumagai T."/>
            <person name="Terai G."/>
            <person name="Kusumoto K."/>
            <person name="Arima T."/>
            <person name="Akita O."/>
            <person name="Kashiwagi Y."/>
            <person name="Abe K."/>
            <person name="Gomi K."/>
            <person name="Horiuchi H."/>
            <person name="Kitamoto K."/>
            <person name="Kobayashi T."/>
            <person name="Takeuchi M."/>
            <person name="Denning D.W."/>
            <person name="Galagan J.E."/>
            <person name="Nierman W.C."/>
            <person name="Yu J."/>
            <person name="Archer D.B."/>
            <person name="Bennett J.W."/>
            <person name="Bhatnagar D."/>
            <person name="Cleveland T.E."/>
            <person name="Fedorova N.D."/>
            <person name="Gotoh O."/>
            <person name="Horikawa H."/>
            <person name="Hosoyama A."/>
            <person name="Ichinomiya M."/>
            <person name="Igarashi R."/>
            <person name="Iwashita K."/>
            <person name="Juvvadi P.R."/>
            <person name="Kato M."/>
            <person name="Kato Y."/>
            <person name="Kin T."/>
            <person name="Kokubun A."/>
            <person name="Maeda H."/>
            <person name="Maeyama N."/>
            <person name="Maruyama J."/>
            <person name="Nagasaki H."/>
            <person name="Nakajima T."/>
            <person name="Oda K."/>
            <person name="Okada K."/>
            <person name="Paulsen I."/>
            <person name="Sakamoto K."/>
            <person name="Sawano T."/>
            <person name="Takahashi M."/>
            <person name="Takase K."/>
            <person name="Terabayashi Y."/>
            <person name="Wortman J.R."/>
            <person name="Yamada O."/>
            <person name="Yamagata Y."/>
            <person name="Anazawa H."/>
            <person name="Hata Y."/>
            <person name="Koide Y."/>
            <person name="Komori T."/>
            <person name="Koyama Y."/>
            <person name="Minetoki T."/>
            <person name="Suharnan S."/>
            <person name="Tanaka A."/>
            <person name="Isono K."/>
            <person name="Kuhara S."/>
            <person name="Ogasawara N."/>
            <person name="Kikuchi H."/>
        </authorList>
    </citation>
    <scope>NUCLEOTIDE SEQUENCE [LARGE SCALE GENOMIC DNA]</scope>
    <source>
        <strain>ATCC 42149 / RIB 40</strain>
    </source>
</reference>
<feature type="chain" id="PRO_0000398022" description="Arginine biosynthesis bifunctional protein ArgJ alpha chain" evidence="1">
    <location>
        <begin position="1"/>
        <end position="223"/>
    </location>
</feature>
<feature type="chain" id="PRO_0000398023" description="Arginine biosynthesis bifunctional protein ArgJ beta chain" evidence="1">
    <location>
        <begin position="224"/>
        <end position="456"/>
    </location>
</feature>
<feature type="active site" description="Nucleophile" evidence="1">
    <location>
        <position position="224"/>
    </location>
</feature>
<feature type="binding site" evidence="1">
    <location>
        <position position="184"/>
    </location>
    <ligand>
        <name>substrate</name>
    </ligand>
</feature>
<feature type="binding site" evidence="1">
    <location>
        <position position="213"/>
    </location>
    <ligand>
        <name>substrate</name>
    </ligand>
</feature>
<feature type="binding site" evidence="1">
    <location>
        <position position="224"/>
    </location>
    <ligand>
        <name>substrate</name>
    </ligand>
</feature>
<feature type="binding site" evidence="1">
    <location>
        <position position="311"/>
    </location>
    <ligand>
        <name>substrate</name>
    </ligand>
</feature>
<feature type="binding site" evidence="1">
    <location>
        <position position="451"/>
    </location>
    <ligand>
        <name>substrate</name>
    </ligand>
</feature>
<feature type="binding site" evidence="1">
    <location>
        <position position="456"/>
    </location>
    <ligand>
        <name>substrate</name>
    </ligand>
</feature>
<feature type="site" description="Involved in the stabilization of negative charge on the oxyanion by the formation of the oxyanion hole" evidence="1">
    <location>
        <position position="145"/>
    </location>
</feature>
<feature type="site" description="Involved in the stabilization of negative charge on the oxyanion by the formation of the oxyanion hole" evidence="1">
    <location>
        <position position="146"/>
    </location>
</feature>
<feature type="site" description="Cleavage; by autolysis" evidence="1">
    <location>
        <begin position="223"/>
        <end position="224"/>
    </location>
</feature>
<protein>
    <recommendedName>
        <fullName evidence="1">Arginine biosynthesis bifunctional protein ArgJ, mitochondrial</fullName>
    </recommendedName>
    <domain>
        <recommendedName>
            <fullName evidence="1">Glutamate N-acetyltransferase</fullName>
            <shortName evidence="1">GAT</shortName>
            <ecNumber evidence="1">2.3.1.35</ecNumber>
        </recommendedName>
        <alternativeName>
            <fullName evidence="1">Ornithine acetyltransferase</fullName>
            <shortName evidence="1">OATase</shortName>
        </alternativeName>
        <alternativeName>
            <fullName evidence="1">Ornithine transacetylase</fullName>
        </alternativeName>
    </domain>
    <domain>
        <recommendedName>
            <fullName evidence="1">Amino-acid acetyltransferase</fullName>
            <ecNumber evidence="1">2.3.1.1</ecNumber>
        </recommendedName>
        <alternativeName>
            <fullName evidence="1">N-acetylglutamate synthase</fullName>
            <shortName evidence="1">AGS</shortName>
        </alternativeName>
    </domain>
    <component>
        <recommendedName>
            <fullName evidence="1">Arginine biosynthesis bifunctional protein ArgJ alpha chain</fullName>
        </recommendedName>
    </component>
    <component>
        <recommendedName>
            <fullName evidence="1">Arginine biosynthesis bifunctional protein ArgJ beta chain</fullName>
        </recommendedName>
    </component>
</protein>
<gene>
    <name type="ORF">AO090701000729</name>
</gene>
<evidence type="ECO:0000255" key="1">
    <source>
        <dbReference type="HAMAP-Rule" id="MF_03124"/>
    </source>
</evidence>
<accession>Q2U7R8</accession>
<comment type="function">
    <text evidence="1">Catalyzes two activities which are involved in the cyclic version of arginine biosynthesis: the synthesis of acetylglutamate from glutamate and acetyl-CoA, and of ornithine by transacetylation between acetylornithine and glutamate.</text>
</comment>
<comment type="catalytic activity">
    <reaction evidence="1">
        <text>N(2)-acetyl-L-ornithine + L-glutamate = N-acetyl-L-glutamate + L-ornithine</text>
        <dbReference type="Rhea" id="RHEA:15349"/>
        <dbReference type="ChEBI" id="CHEBI:29985"/>
        <dbReference type="ChEBI" id="CHEBI:44337"/>
        <dbReference type="ChEBI" id="CHEBI:46911"/>
        <dbReference type="ChEBI" id="CHEBI:57805"/>
        <dbReference type="EC" id="2.3.1.35"/>
    </reaction>
</comment>
<comment type="catalytic activity">
    <reaction evidence="1">
        <text>L-glutamate + acetyl-CoA = N-acetyl-L-glutamate + CoA + H(+)</text>
        <dbReference type="Rhea" id="RHEA:24292"/>
        <dbReference type="ChEBI" id="CHEBI:15378"/>
        <dbReference type="ChEBI" id="CHEBI:29985"/>
        <dbReference type="ChEBI" id="CHEBI:44337"/>
        <dbReference type="ChEBI" id="CHEBI:57287"/>
        <dbReference type="ChEBI" id="CHEBI:57288"/>
        <dbReference type="EC" id="2.3.1.1"/>
    </reaction>
</comment>
<comment type="pathway">
    <text evidence="1">Amino-acid biosynthesis; L-arginine biosynthesis; L-ornithine and N-acetyl-L-glutamate from L-glutamate and N(2)-acetyl-L-ornithine (cyclic): step 1/1.</text>
</comment>
<comment type="pathway">
    <text evidence="1">Amino-acid biosynthesis; L-arginine biosynthesis; N(2)-acetyl-L-ornithine from L-glutamate: step 1/4.</text>
</comment>
<comment type="subunit">
    <text evidence="1">Heterodimer of an alpha and a beta chain.</text>
</comment>
<comment type="subcellular location">
    <subcellularLocation>
        <location evidence="1">Mitochondrion matrix</location>
    </subcellularLocation>
</comment>
<comment type="PTM">
    <text evidence="1">The alpha and beta chains are autoproteolytically processed from a single precursor protein within the mitochondrion.</text>
</comment>
<comment type="miscellaneous">
    <text evidence="1">This protein may be expected to contain an N-terminal transit peptide but none has been predicted.</text>
</comment>
<comment type="similarity">
    <text evidence="1">Belongs to the ArgJ family.</text>
</comment>
<organism>
    <name type="scientific">Aspergillus oryzae (strain ATCC 42149 / RIB 40)</name>
    <name type="common">Yellow koji mold</name>
    <dbReference type="NCBI Taxonomy" id="510516"/>
    <lineage>
        <taxon>Eukaryota</taxon>
        <taxon>Fungi</taxon>
        <taxon>Dikarya</taxon>
        <taxon>Ascomycota</taxon>
        <taxon>Pezizomycotina</taxon>
        <taxon>Eurotiomycetes</taxon>
        <taxon>Eurotiomycetidae</taxon>
        <taxon>Eurotiales</taxon>
        <taxon>Aspergillaceae</taxon>
        <taxon>Aspergillus</taxon>
        <taxon>Aspergillus subgen. Circumdati</taxon>
    </lineage>
</organism>
<name>ARGJ_ASPOR</name>